<gene>
    <name evidence="7" type="primary">SABP2</name>
    <name type="ordered locus">LOC107791137</name>
</gene>
<sequence>MKEGKHFVLVHGACHGGWSWYKLKPLLEAAGHKVTALDLAASGTDLRKIEELRTLYDYTLPLMELMESLSADEKVILVGHSLGGMNLGLAMEKYPQKIYAAVFLAAFMPDSVHNSSFVLEQYNERTPAENWLDTQFLPYGSPEEPLTSMFFGPKFLAHKLYQLCSPEDLALASSLVRPSSLFMEDLSKAKYFTDERFGSVKRVYIVCTEDKGIPEEFQRWQIDNIGVTEAIEIKGADHMAMLCEPQKLCASLLEIAHKYN</sequence>
<accession>Q6RYA0</accession>
<accession>A0A1S3ZW27</accession>
<evidence type="ECO:0000269" key="1">
    <source>
    </source>
</evidence>
<evidence type="ECO:0000269" key="2">
    <source>
    </source>
</evidence>
<evidence type="ECO:0000269" key="3">
    <source>
    </source>
</evidence>
<evidence type="ECO:0000269" key="4">
    <source>
    </source>
</evidence>
<evidence type="ECO:0000269" key="5">
    <source>
    </source>
</evidence>
<evidence type="ECO:0000269" key="6">
    <source>
    </source>
</evidence>
<evidence type="ECO:0000303" key="7">
    <source>
    </source>
</evidence>
<evidence type="ECO:0000303" key="8">
    <source>
    </source>
</evidence>
<evidence type="ECO:0000305" key="9"/>
<evidence type="ECO:0007744" key="10">
    <source>
        <dbReference type="PDB" id="1Y7I"/>
    </source>
</evidence>
<evidence type="ECO:0007829" key="11">
    <source>
        <dbReference type="PDB" id="1XKL"/>
    </source>
</evidence>
<evidence type="ECO:0007829" key="12">
    <source>
        <dbReference type="PDB" id="1Y7I"/>
    </source>
</evidence>
<keyword id="KW-0002">3D-structure</keyword>
<keyword id="KW-0378">Hydrolase</keyword>
<keyword id="KW-0391">Immunity</keyword>
<keyword id="KW-0399">Innate immunity</keyword>
<keyword id="KW-0611">Plant defense</keyword>
<keyword id="KW-1185">Reference proteome</keyword>
<organism>
    <name type="scientific">Nicotiana tabacum</name>
    <name type="common">Common tobacco</name>
    <dbReference type="NCBI Taxonomy" id="4097"/>
    <lineage>
        <taxon>Eukaryota</taxon>
        <taxon>Viridiplantae</taxon>
        <taxon>Streptophyta</taxon>
        <taxon>Embryophyta</taxon>
        <taxon>Tracheophyta</taxon>
        <taxon>Spermatophyta</taxon>
        <taxon>Magnoliopsida</taxon>
        <taxon>eudicotyledons</taxon>
        <taxon>Gunneridae</taxon>
        <taxon>Pentapetalae</taxon>
        <taxon>asterids</taxon>
        <taxon>lamiids</taxon>
        <taxon>Solanales</taxon>
        <taxon>Solanaceae</taxon>
        <taxon>Nicotianoideae</taxon>
        <taxon>Nicotianeae</taxon>
        <taxon>Nicotiana</taxon>
    </lineage>
</organism>
<reference key="1">
    <citation type="journal article" date="2003" name="Proc. Natl. Acad. Sci. U.S.A.">
        <title>High-affinity salicylic acid-binding protein 2 is required for plant innate immunity and has salicylic acid-stimulated lipase activity.</title>
        <authorList>
            <person name="Kumar D."/>
            <person name="Klessig D.F."/>
        </authorList>
    </citation>
    <scope>NUCLEOTIDE SEQUENCE [MRNA]</scope>
    <scope>FUNCTION</scope>
    <source>
        <strain>cv. Xanthi NC</strain>
    </source>
</reference>
<reference key="2">
    <citation type="journal article" date="2014" name="Nat. Commun.">
        <title>The tobacco genome sequence and its comparison with those of tomato and potato.</title>
        <authorList>
            <person name="Sierro N."/>
            <person name="Battey J.N."/>
            <person name="Ouadi S."/>
            <person name="Bakaher N."/>
            <person name="Bovet L."/>
            <person name="Willig A."/>
            <person name="Goepfert S."/>
            <person name="Peitsch M.C."/>
            <person name="Ivanov N.V."/>
        </authorList>
    </citation>
    <scope>NUCLEOTIDE SEQUENCE [LARGE SCALE GENOMIC DNA]</scope>
    <source>
        <strain>cv. TN90</strain>
    </source>
</reference>
<reference key="3">
    <citation type="journal article" date="2007" name="Science">
        <title>Methyl salicylate is a critical mobile signal for plant systemic acquired resistance.</title>
        <authorList>
            <person name="Park S.W."/>
            <person name="Kaimoyo E."/>
            <person name="Kumar D."/>
            <person name="Mosher S."/>
            <person name="Klessig D.F."/>
        </authorList>
    </citation>
    <scope>FUNCTION</scope>
    <scope>MUTAGENESIS OF ALA-13; SER-81 AND HIS-238</scope>
    <scope>ACTIVE SITE</scope>
</reference>
<reference key="4">
    <citation type="journal article" date="2009" name="J. Biol. Chem.">
        <title>Use of a synthetic salicylic acid analog to investigate the roles of methyl salicylate and its esterases in plant disease resistance.</title>
        <authorList>
            <person name="Park S.W."/>
            <person name="Liu P.P."/>
            <person name="Forouhar F."/>
            <person name="Vlot A.C."/>
            <person name="Tong L."/>
            <person name="Tietjen K."/>
            <person name="Klessig D.F."/>
        </authorList>
    </citation>
    <scope>FUNCTION</scope>
    <scope>ACTIVITY REGULATION</scope>
</reference>
<reference key="5">
    <citation type="journal article" date="2010" name="Chem. Biol.">
        <title>Switching from an esterase to a hydroxynitrile lyase mechanism requires only two amino acid substitutions.</title>
        <authorList>
            <person name="Padhi S.K."/>
            <person name="Fujii R."/>
            <person name="Legatt G.A."/>
            <person name="Fossum S.L."/>
            <person name="Berchtold R."/>
            <person name="Kazlauskas R.J."/>
        </authorList>
    </citation>
    <scope>FUNCTION</scope>
    <scope>CATALYTIC ACTIVITY</scope>
    <scope>MUTAGENESIS OF GLY-12 AND MET-239</scope>
</reference>
<reference key="6">
    <citation type="journal article" date="2010" name="FEBS Lett.">
        <title>SABP2, a methyl salicylate esterase is required for the systemic acquired resistance induced by acibenzolar-S-methyl in plants.</title>
        <authorList>
            <person name="Tripathi D."/>
            <person name="Jiang Y.L."/>
            <person name="Kumar D."/>
        </authorList>
    </citation>
    <scope>FUNCTION</scope>
</reference>
<reference key="7">
    <citation type="journal article" date="2005" name="Proc. Natl. Acad. Sci. U.S.A.">
        <title>Structural and biochemical studies identify tobacco SABP2 as a methyl salicylate esterase and implicate it in plant innate immunity.</title>
        <authorList>
            <person name="Forouhar F."/>
            <person name="Yang Y."/>
            <person name="Kumar D."/>
            <person name="Chen Y."/>
            <person name="Fridman E."/>
            <person name="Park S.W."/>
            <person name="Chiang Y."/>
            <person name="Acton T.B."/>
            <person name="Montelione G.T."/>
            <person name="Pichersky E."/>
            <person name="Klessig D.F."/>
            <person name="Tong L."/>
        </authorList>
    </citation>
    <scope>X-RAY CRYSTALLOGRAPHY (2.00 ANGSTROMS) IN COMPLEX WITH SALICYLIC ACID</scope>
    <scope>FUNCTION</scope>
    <scope>BIOPHYSICOCHEMICAL PROPERTIES</scope>
    <scope>CATALYTIC ACTIVITY</scope>
    <scope>ACTIVITY REGULATION</scope>
    <scope>MUTAGENESIS OF SER-81</scope>
    <scope>ACTIVE SITE</scope>
    <scope>PATHWAY</scope>
</reference>
<protein>
    <recommendedName>
        <fullName evidence="7">Salicylic acid-binding protein 2</fullName>
        <shortName evidence="7">NtSABP2</shortName>
        <ecNumber evidence="2 6">3.1.1.-</ecNumber>
    </recommendedName>
    <alternativeName>
        <fullName evidence="8">Methyl salicylate esterase</fullName>
    </alternativeName>
</protein>
<proteinExistence type="evidence at protein level"/>
<name>SABP2_TOBAC</name>
<feature type="chain" id="PRO_0000418175" description="Salicylic acid-binding protein 2">
    <location>
        <begin position="1"/>
        <end position="260"/>
    </location>
</feature>
<feature type="active site" description="Acyl-ester intermediate" evidence="2 3">
    <location>
        <position position="81"/>
    </location>
</feature>
<feature type="active site" description="Charge relay system" evidence="2">
    <location>
        <position position="210"/>
    </location>
</feature>
<feature type="active site" description="Charge relay system" evidence="3">
    <location>
        <position position="238"/>
    </location>
</feature>
<feature type="binding site" evidence="2 10">
    <location>
        <position position="13"/>
    </location>
    <ligand>
        <name>salicylate</name>
        <dbReference type="ChEBI" id="CHEBI:30762"/>
    </ligand>
</feature>
<feature type="binding site" evidence="2 10">
    <location>
        <position position="81"/>
    </location>
    <ligand>
        <name>salicylate</name>
        <dbReference type="ChEBI" id="CHEBI:30762"/>
    </ligand>
</feature>
<feature type="binding site" evidence="2 10">
    <location>
        <position position="159"/>
    </location>
    <ligand>
        <name>salicylate</name>
        <dbReference type="ChEBI" id="CHEBI:30762"/>
    </ligand>
</feature>
<feature type="binding site" evidence="2 10">
    <location>
        <position position="238"/>
    </location>
    <ligand>
        <name>salicylate</name>
        <dbReference type="ChEBI" id="CHEBI:30762"/>
    </ligand>
</feature>
<feature type="binding site" evidence="2 10">
    <location>
        <position position="253"/>
    </location>
    <ligand>
        <name>salicylate</name>
        <dbReference type="ChEBI" id="CHEBI:30762"/>
    </ligand>
</feature>
<feature type="binding site" evidence="2 10">
    <location>
        <position position="257"/>
    </location>
    <ligand>
        <name>salicylate</name>
        <dbReference type="ChEBI" id="CHEBI:30762"/>
    </ligand>
</feature>
<feature type="mutagenesis site" description="Abolishes methyl salicylate esterase activity and favors hydroxynitrile lyase activity; in association with K-239." evidence="6">
    <original>G</original>
    <variation>T</variation>
    <location>
        <position position="12"/>
    </location>
</feature>
<feature type="mutagenesis site" description="Abolishes salicylic acid-binding." evidence="3">
    <original>A</original>
    <variation>L</variation>
    <location>
        <position position="13"/>
    </location>
</feature>
<feature type="mutagenesis site" description="Abolishes methyl salicylate esterase activity." evidence="2 3">
    <original>S</original>
    <variation>A</variation>
    <location>
        <position position="81"/>
    </location>
</feature>
<feature type="mutagenesis site" description="Abolishes salicylic acid-binding and methyl salicylate esterase activity." evidence="3">
    <original>H</original>
    <variation>A</variation>
    <location>
        <position position="238"/>
    </location>
</feature>
<feature type="mutagenesis site" description="Abolishes methyl salicylate esterase activity and favors hydroxynitrile lyase activity; in association with T-12." evidence="6">
    <original>M</original>
    <variation>K</variation>
    <location>
        <position position="239"/>
    </location>
</feature>
<feature type="strand" evidence="11">
    <location>
        <begin position="6"/>
        <end position="10"/>
    </location>
</feature>
<feature type="helix" evidence="11">
    <location>
        <begin position="17"/>
        <end position="20"/>
    </location>
</feature>
<feature type="helix" evidence="11">
    <location>
        <begin position="23"/>
        <end position="29"/>
    </location>
</feature>
<feature type="strand" evidence="11">
    <location>
        <begin position="33"/>
        <end position="36"/>
    </location>
</feature>
<feature type="helix" evidence="11">
    <location>
        <begin position="49"/>
        <end position="51"/>
    </location>
</feature>
<feature type="helix" evidence="11">
    <location>
        <begin position="55"/>
        <end position="67"/>
    </location>
</feature>
<feature type="strand" evidence="11">
    <location>
        <begin position="71"/>
        <end position="73"/>
    </location>
</feature>
<feature type="strand" evidence="11">
    <location>
        <begin position="75"/>
        <end position="80"/>
    </location>
</feature>
<feature type="helix" evidence="11">
    <location>
        <begin position="83"/>
        <end position="93"/>
    </location>
</feature>
<feature type="helix" evidence="11">
    <location>
        <begin position="95"/>
        <end position="97"/>
    </location>
</feature>
<feature type="strand" evidence="11">
    <location>
        <begin position="98"/>
        <end position="105"/>
    </location>
</feature>
<feature type="strand" evidence="11">
    <location>
        <begin position="111"/>
        <end position="113"/>
    </location>
</feature>
<feature type="helix" evidence="11">
    <location>
        <begin position="117"/>
        <end position="124"/>
    </location>
</feature>
<feature type="turn" evidence="11">
    <location>
        <begin position="128"/>
        <end position="133"/>
    </location>
</feature>
<feature type="strand" evidence="11">
    <location>
        <begin position="135"/>
        <end position="138"/>
    </location>
</feature>
<feature type="strand" evidence="12">
    <location>
        <begin position="142"/>
        <end position="144"/>
    </location>
</feature>
<feature type="strand" evidence="11">
    <location>
        <begin position="147"/>
        <end position="150"/>
    </location>
</feature>
<feature type="helix" evidence="11">
    <location>
        <begin position="153"/>
        <end position="159"/>
    </location>
</feature>
<feature type="helix" evidence="11">
    <location>
        <begin position="166"/>
        <end position="175"/>
    </location>
</feature>
<feature type="helix" evidence="11">
    <location>
        <begin position="183"/>
        <end position="188"/>
    </location>
</feature>
<feature type="turn" evidence="11">
    <location>
        <begin position="194"/>
        <end position="196"/>
    </location>
</feature>
<feature type="helix" evidence="11">
    <location>
        <begin position="197"/>
        <end position="199"/>
    </location>
</feature>
<feature type="strand" evidence="11">
    <location>
        <begin position="202"/>
        <end position="207"/>
    </location>
</feature>
<feature type="turn" evidence="11">
    <location>
        <begin position="211"/>
        <end position="214"/>
    </location>
</feature>
<feature type="helix" evidence="11">
    <location>
        <begin position="215"/>
        <end position="225"/>
    </location>
</feature>
<feature type="strand" evidence="11">
    <location>
        <begin position="228"/>
        <end position="233"/>
    </location>
</feature>
<feature type="helix" evidence="11">
    <location>
        <begin position="240"/>
        <end position="243"/>
    </location>
</feature>
<feature type="helix" evidence="11">
    <location>
        <begin position="245"/>
        <end position="258"/>
    </location>
</feature>
<comment type="function">
    <text evidence="1 2 3 4 5 6">Required to convert methyl salicylate (MeSA) to salicylic acid (SA) as part of the signal transduction pathways that activate systemic acquired resistance in systemic tissue. MeSA is believed to be an inactive form that needs to be demethylated to exert a biological effect. Also able to catalyze the conversion of acibenzolar-S-methyl into acibenzolar to induce systemic acquired resistance.</text>
</comment>
<comment type="catalytic activity">
    <reaction evidence="2">
        <text>methyl salicylate + H2O = salicylate + methanol + H(+)</text>
        <dbReference type="Rhea" id="RHEA:33611"/>
        <dbReference type="ChEBI" id="CHEBI:15377"/>
        <dbReference type="ChEBI" id="CHEBI:15378"/>
        <dbReference type="ChEBI" id="CHEBI:17790"/>
        <dbReference type="ChEBI" id="CHEBI:30762"/>
        <dbReference type="ChEBI" id="CHEBI:31832"/>
    </reaction>
    <physiologicalReaction direction="left-to-right" evidence="2">
        <dbReference type="Rhea" id="RHEA:33612"/>
    </physiologicalReaction>
</comment>
<comment type="activity regulation">
    <text evidence="2 4">Esterase activity is down-regulated by salicylic acid (SA) or by tetraFA, a synthetic SA analog.</text>
</comment>
<comment type="biophysicochemical properties">
    <kinetics>
        <KM evidence="2">8.6 uM for methyl salicylate (MeSA)</KM>
        <text evidence="2">kcat is 0.45 sec(-1) with methyl salicylate as substrate.</text>
    </kinetics>
</comment>
<comment type="pathway">
    <text evidence="2">Plant hormone biosynthesis.</text>
</comment>
<comment type="miscellaneous">
    <text>Two amino acid substitutions near the catalytic pocket are sufficient to switch from an esterase to a hydroxynitrile lyase activity.</text>
</comment>
<comment type="similarity">
    <text evidence="9">Belongs to the AB hydrolase superfamily. Methylesterase family.</text>
</comment>
<dbReference type="EC" id="3.1.1.-" evidence="2 6"/>
<dbReference type="EMBL" id="AY485932">
    <property type="protein sequence ID" value="AAR87711.1"/>
    <property type="molecule type" value="mRNA"/>
</dbReference>
<dbReference type="RefSeq" id="NP_001312442.1">
    <property type="nucleotide sequence ID" value="NM_001325513.1"/>
</dbReference>
<dbReference type="PDB" id="1XKL">
    <property type="method" value="X-ray"/>
    <property type="resolution" value="2.00 A"/>
    <property type="chains" value="A/B/C/D=1-260"/>
</dbReference>
<dbReference type="PDB" id="1Y7H">
    <property type="method" value="X-ray"/>
    <property type="resolution" value="2.52 A"/>
    <property type="chains" value="A/B/C/D/E/F/G/H=1-260"/>
</dbReference>
<dbReference type="PDB" id="1Y7I">
    <property type="method" value="X-ray"/>
    <property type="resolution" value="2.10 A"/>
    <property type="chains" value="A/B=1-260"/>
</dbReference>
<dbReference type="PDBsum" id="1XKL"/>
<dbReference type="PDBsum" id="1Y7H"/>
<dbReference type="PDBsum" id="1Y7I"/>
<dbReference type="SMR" id="Q6RYA0"/>
<dbReference type="STRING" id="4097.A0A1S3ZW27"/>
<dbReference type="DrugCentral" id="Q6RYA0"/>
<dbReference type="ESTHER" id="nicta-SABP2">
    <property type="family name" value="Hydroxynitrile_lyase"/>
</dbReference>
<dbReference type="PaxDb" id="4097-Q6RYA0"/>
<dbReference type="GeneID" id="107791137"/>
<dbReference type="KEGG" id="nta:107791137"/>
<dbReference type="OMA" id="SMAHEAW"/>
<dbReference type="OrthoDB" id="408373at2759"/>
<dbReference type="BioCyc" id="MetaCyc:MONOMER18C3-53"/>
<dbReference type="SABIO-RK" id="Q6RYA0"/>
<dbReference type="EvolutionaryTrace" id="Q6RYA0"/>
<dbReference type="Proteomes" id="UP000084051">
    <property type="component" value="Unplaced"/>
</dbReference>
<dbReference type="GO" id="GO:0016298">
    <property type="term" value="F:lipase activity"/>
    <property type="evidence" value="ECO:0000314"/>
    <property type="project" value="UniProtKB"/>
</dbReference>
<dbReference type="GO" id="GO:0080030">
    <property type="term" value="F:methyl indole-3-acetate esterase activity"/>
    <property type="evidence" value="ECO:0000318"/>
    <property type="project" value="GO_Central"/>
</dbReference>
<dbReference type="GO" id="GO:0080032">
    <property type="term" value="F:methyl jasmonate esterase activity"/>
    <property type="evidence" value="ECO:0000318"/>
    <property type="project" value="GO_Central"/>
</dbReference>
<dbReference type="GO" id="GO:0080031">
    <property type="term" value="F:methyl salicylate esterase activity"/>
    <property type="evidence" value="ECO:0000314"/>
    <property type="project" value="UniProtKB"/>
</dbReference>
<dbReference type="GO" id="GO:0045087">
    <property type="term" value="P:innate immune response"/>
    <property type="evidence" value="ECO:0007669"/>
    <property type="project" value="UniProtKB-KW"/>
</dbReference>
<dbReference type="GO" id="GO:0009694">
    <property type="term" value="P:jasmonic acid metabolic process"/>
    <property type="evidence" value="ECO:0000318"/>
    <property type="project" value="GO_Central"/>
</dbReference>
<dbReference type="GO" id="GO:0009696">
    <property type="term" value="P:salicylic acid metabolic process"/>
    <property type="evidence" value="ECO:0000318"/>
    <property type="project" value="GO_Central"/>
</dbReference>
<dbReference type="GO" id="GO:0009862">
    <property type="term" value="P:systemic acquired resistance, salicylic acid mediated signaling pathway"/>
    <property type="evidence" value="ECO:0000315"/>
    <property type="project" value="UniProtKB"/>
</dbReference>
<dbReference type="FunFam" id="3.40.50.1820:FF:000051">
    <property type="entry name" value="(S)-hydroxynitrile lyase"/>
    <property type="match status" value="1"/>
</dbReference>
<dbReference type="Gene3D" id="3.40.50.1820">
    <property type="entry name" value="alpha/beta hydrolase"/>
    <property type="match status" value="1"/>
</dbReference>
<dbReference type="InterPro" id="IPR000073">
    <property type="entry name" value="AB_hydrolase_1"/>
</dbReference>
<dbReference type="InterPro" id="IPR029058">
    <property type="entry name" value="AB_hydrolase_fold"/>
</dbReference>
<dbReference type="InterPro" id="IPR045889">
    <property type="entry name" value="MES/HNL"/>
</dbReference>
<dbReference type="PANTHER" id="PTHR10992:SF1083">
    <property type="entry name" value="METHYLESTERASE 1"/>
    <property type="match status" value="1"/>
</dbReference>
<dbReference type="PANTHER" id="PTHR10992">
    <property type="entry name" value="METHYLESTERASE FAMILY MEMBER"/>
    <property type="match status" value="1"/>
</dbReference>
<dbReference type="Pfam" id="PF12697">
    <property type="entry name" value="Abhydrolase_6"/>
    <property type="match status" value="1"/>
</dbReference>
<dbReference type="SUPFAM" id="SSF53474">
    <property type="entry name" value="alpha/beta-Hydrolases"/>
    <property type="match status" value="1"/>
</dbReference>
<dbReference type="PROSITE" id="PS00120">
    <property type="entry name" value="LIPASE_SER"/>
    <property type="match status" value="1"/>
</dbReference>